<comment type="function">
    <text evidence="2 7">S-adenosyl-L-methionine-dependent rRNA methyltransferase which may methylate two specific adjacent adenosines in the loop of a conserved hairpin near the 3'-end of 12S mitochondrial rRNA (By similarity). Component of the mitochondrial transcription initiation complex, composed at least of TFB2M, TFAM and POLRMT that is required for basal transcription of mitochondrial DNA (PubMed:15526033). In this complex, TFAM recruits POLRMT to a specific promoter whereas TFB2M induces structural changes in POLRMT to enable promoter opening and trapping of the DNA non-template strand (PubMed:15526033). Stimulates transcription independently of the methyltransferase activity (By similarity).</text>
</comment>
<comment type="catalytic activity">
    <reaction evidence="2">
        <text>adenosine in rRNA + S-adenosyl-L-methionine = N(6)-methyladenosine in rRNA + S-adenosyl-L-homocysteine + H(+)</text>
        <dbReference type="Rhea" id="RHEA:58728"/>
        <dbReference type="Rhea" id="RHEA-COMP:15198"/>
        <dbReference type="Rhea" id="RHEA-COMP:15199"/>
        <dbReference type="ChEBI" id="CHEBI:15378"/>
        <dbReference type="ChEBI" id="CHEBI:57856"/>
        <dbReference type="ChEBI" id="CHEBI:59789"/>
        <dbReference type="ChEBI" id="CHEBI:74411"/>
        <dbReference type="ChEBI" id="CHEBI:74449"/>
    </reaction>
</comment>
<comment type="subunit">
    <text evidence="2">Homodimer. Component of the mitochondrial transcription initiation complex, composed at least of TFB2M, TFAM and POLRMT. In this complex TFAM recruits POLRMT to the promoter whereas TFB2M induces structural changes in POLRMT to enable promoter opening and trapping of the DNA non-template strand. Interacts with mitochondrial RNA polymerase POLRMT. Interacts with TFAM.</text>
</comment>
<comment type="subcellular location">
    <subcellularLocation>
        <location evidence="1">Mitochondrion</location>
    </subcellularLocation>
</comment>
<comment type="tissue specificity">
    <text evidence="6">Ubiquitously expressed.</text>
</comment>
<comment type="similarity">
    <text evidence="4">Belongs to the class I-like SAM-binding methyltransferase superfamily. rRNA adenine N(6)-methyltransferase family. KsgA subfamily.</text>
</comment>
<protein>
    <recommendedName>
        <fullName evidence="8">Dimethyladenosine transferase 2, mitochondrial</fullName>
        <ecNumber evidence="2">2.1.1.-</ecNumber>
    </recommendedName>
    <alternativeName>
        <fullName>Mitochondrial 12S rRNA dimethylase 2</fullName>
    </alternativeName>
    <alternativeName>
        <fullName>Mitochondrial transcription factor B2</fullName>
        <shortName>mTFB2M</shortName>
        <shortName>mtTFB2</shortName>
    </alternativeName>
    <alternativeName>
        <fullName>S-adenosylmethionine-6-N', N'-adenosyl(rRNA) dimethyltransferase 2</fullName>
    </alternativeName>
</protein>
<evidence type="ECO:0000250" key="1"/>
<evidence type="ECO:0000250" key="2">
    <source>
        <dbReference type="UniProtKB" id="Q9H5Q4"/>
    </source>
</evidence>
<evidence type="ECO:0000255" key="3"/>
<evidence type="ECO:0000255" key="4">
    <source>
        <dbReference type="PROSITE-ProRule" id="PRU01026"/>
    </source>
</evidence>
<evidence type="ECO:0000256" key="5">
    <source>
        <dbReference type="SAM" id="MobiDB-lite"/>
    </source>
</evidence>
<evidence type="ECO:0000269" key="6">
    <source>
    </source>
</evidence>
<evidence type="ECO:0000269" key="7">
    <source>
    </source>
</evidence>
<evidence type="ECO:0000305" key="8"/>
<evidence type="ECO:0000312" key="9">
    <source>
        <dbReference type="MGI" id="MGI:107937"/>
    </source>
</evidence>
<keyword id="KW-0489">Methyltransferase</keyword>
<keyword id="KW-0496">Mitochondrion</keyword>
<keyword id="KW-1185">Reference proteome</keyword>
<keyword id="KW-0694">RNA-binding</keyword>
<keyword id="KW-0698">rRNA processing</keyword>
<keyword id="KW-0949">S-adenosyl-L-methionine</keyword>
<keyword id="KW-0804">Transcription</keyword>
<keyword id="KW-0805">Transcription regulation</keyword>
<keyword id="KW-0808">Transferase</keyword>
<keyword id="KW-0809">Transit peptide</keyword>
<sequence>MRGPAMRLPPRIALSALARGPSCILGSGAATRKDWQTRNRRGFSDFNIEPLPDSDLEESSPWTSRNRSEPTRHIACKKAARNLVRDLLEHQNPSRQIILECNPGPGILTGALLKAGARVVAFESEKTFIPHLEPLQRNMDGELQVVHCDFFKMDPRYQEVVRPDVSSQAIFQNLGIKAVPWSAGVPIKVFGILPYKHERRILWKILFDLYSCESIYRYGRVELNMFVSEKEFRKLIATPKRPDLYQVMAVLWQVACDVKFLHMEPWSSFSVHTENGHLEKSKHGESVNLLKQNLYLVRMTPRRTLFTENLSPLNYDIFFHLVKHCFGKRNAPIIRHLRSLSTVDPINILRQIRKNPGDTAARMYPHDFKKLFETIEQSEDSVFKWIYDYCPEDMEF</sequence>
<feature type="transit peptide" description="Mitochondrion" evidence="3">
    <location>
        <begin position="1"/>
        <end position="43"/>
    </location>
</feature>
<feature type="chain" id="PRO_0000273180" description="Dimethyladenosine transferase 2, mitochondrial">
    <location>
        <begin position="44"/>
        <end position="396"/>
    </location>
</feature>
<feature type="region of interest" description="Disordered" evidence="5">
    <location>
        <begin position="43"/>
        <end position="71"/>
    </location>
</feature>
<feature type="region of interest" description="DNA-binding" evidence="2">
    <location>
        <begin position="328"/>
        <end position="329"/>
    </location>
</feature>
<feature type="binding site" evidence="4">
    <location>
        <position position="74"/>
    </location>
    <ligand>
        <name>S-adenosyl-L-methionine</name>
        <dbReference type="ChEBI" id="CHEBI:59789"/>
    </ligand>
</feature>
<feature type="binding site" evidence="4">
    <location>
        <position position="123"/>
    </location>
    <ligand>
        <name>S-adenosyl-L-methionine</name>
        <dbReference type="ChEBI" id="CHEBI:59789"/>
    </ligand>
</feature>
<feature type="binding site" evidence="4">
    <location>
        <position position="149"/>
    </location>
    <ligand>
        <name>S-adenosyl-L-methionine</name>
        <dbReference type="ChEBI" id="CHEBI:59789"/>
    </ligand>
</feature>
<feature type="sequence conflict" description="In Ref. 1; AAA37817." evidence="8" ref="1">
    <original>I</original>
    <variation>L</variation>
    <location>
        <position position="12"/>
    </location>
</feature>
<feature type="sequence conflict" description="In Ref. 1; AAA37817." evidence="8" ref="1">
    <original>R</original>
    <variation>G</variation>
    <location>
        <position position="40"/>
    </location>
</feature>
<feature type="sequence conflict" description="In Ref. 1; AAA37817." evidence="8" ref="1">
    <original>T</original>
    <variation>M</variation>
    <location>
        <position position="273"/>
    </location>
</feature>
<feature type="sequence conflict" description="In Ref. 2; BAC41095." evidence="8" ref="2">
    <original>Q</original>
    <variation>P</variation>
    <location>
        <position position="292"/>
    </location>
</feature>
<feature type="sequence conflict" description="In Ref. 2; BAC41095." evidence="8" ref="2">
    <original>E</original>
    <variation>G</variation>
    <location>
        <position position="308"/>
    </location>
</feature>
<feature type="sequence conflict" description="In Ref. 2; BAC41095." evidence="8" ref="2">
    <original>H</original>
    <variation>P</variation>
    <location>
        <position position="324"/>
    </location>
</feature>
<feature type="sequence conflict" description="In Ref. 2; BAC41095." evidence="8" ref="2">
    <original>N</original>
    <variation>H</variation>
    <location>
        <position position="330"/>
    </location>
</feature>
<feature type="sequence conflict" description="In Ref. 2; BAC41095." evidence="8" ref="2">
    <original>R</original>
    <variation>P</variation>
    <location>
        <position position="338"/>
    </location>
</feature>
<feature type="sequence conflict" description="In Ref. 2; BAC41095." evidence="8" ref="2">
    <original>Q</original>
    <variation>P</variation>
    <location>
        <position position="377"/>
    </location>
</feature>
<reference key="1">
    <citation type="submission" date="1991-08" db="EMBL/GenBank/DDBJ databases">
        <authorList>
            <person name="Wang B."/>
            <person name="Hunsperger J.P."/>
            <person name="Laib J."/>
            <person name="Fan D."/>
        </authorList>
    </citation>
    <scope>NUCLEOTIDE SEQUENCE [MRNA]</scope>
    <source>
        <strain>C57BL/6J</strain>
        <tissue>Lymphoma</tissue>
    </source>
</reference>
<reference key="2">
    <citation type="journal article" date="2005" name="Science">
        <title>The transcriptional landscape of the mammalian genome.</title>
        <authorList>
            <person name="Carninci P."/>
            <person name="Kasukawa T."/>
            <person name="Katayama S."/>
            <person name="Gough J."/>
            <person name="Frith M.C."/>
            <person name="Maeda N."/>
            <person name="Oyama R."/>
            <person name="Ravasi T."/>
            <person name="Lenhard B."/>
            <person name="Wells C."/>
            <person name="Kodzius R."/>
            <person name="Shimokawa K."/>
            <person name="Bajic V.B."/>
            <person name="Brenner S.E."/>
            <person name="Batalov S."/>
            <person name="Forrest A.R."/>
            <person name="Zavolan M."/>
            <person name="Davis M.J."/>
            <person name="Wilming L.G."/>
            <person name="Aidinis V."/>
            <person name="Allen J.E."/>
            <person name="Ambesi-Impiombato A."/>
            <person name="Apweiler R."/>
            <person name="Aturaliya R.N."/>
            <person name="Bailey T.L."/>
            <person name="Bansal M."/>
            <person name="Baxter L."/>
            <person name="Beisel K.W."/>
            <person name="Bersano T."/>
            <person name="Bono H."/>
            <person name="Chalk A.M."/>
            <person name="Chiu K.P."/>
            <person name="Choudhary V."/>
            <person name="Christoffels A."/>
            <person name="Clutterbuck D.R."/>
            <person name="Crowe M.L."/>
            <person name="Dalla E."/>
            <person name="Dalrymple B.P."/>
            <person name="de Bono B."/>
            <person name="Della Gatta G."/>
            <person name="di Bernardo D."/>
            <person name="Down T."/>
            <person name="Engstrom P."/>
            <person name="Fagiolini M."/>
            <person name="Faulkner G."/>
            <person name="Fletcher C.F."/>
            <person name="Fukushima T."/>
            <person name="Furuno M."/>
            <person name="Futaki S."/>
            <person name="Gariboldi M."/>
            <person name="Georgii-Hemming P."/>
            <person name="Gingeras T.R."/>
            <person name="Gojobori T."/>
            <person name="Green R.E."/>
            <person name="Gustincich S."/>
            <person name="Harbers M."/>
            <person name="Hayashi Y."/>
            <person name="Hensch T.K."/>
            <person name="Hirokawa N."/>
            <person name="Hill D."/>
            <person name="Huminiecki L."/>
            <person name="Iacono M."/>
            <person name="Ikeo K."/>
            <person name="Iwama A."/>
            <person name="Ishikawa T."/>
            <person name="Jakt M."/>
            <person name="Kanapin A."/>
            <person name="Katoh M."/>
            <person name="Kawasawa Y."/>
            <person name="Kelso J."/>
            <person name="Kitamura H."/>
            <person name="Kitano H."/>
            <person name="Kollias G."/>
            <person name="Krishnan S.P."/>
            <person name="Kruger A."/>
            <person name="Kummerfeld S.K."/>
            <person name="Kurochkin I.V."/>
            <person name="Lareau L.F."/>
            <person name="Lazarevic D."/>
            <person name="Lipovich L."/>
            <person name="Liu J."/>
            <person name="Liuni S."/>
            <person name="McWilliam S."/>
            <person name="Madan Babu M."/>
            <person name="Madera M."/>
            <person name="Marchionni L."/>
            <person name="Matsuda H."/>
            <person name="Matsuzawa S."/>
            <person name="Miki H."/>
            <person name="Mignone F."/>
            <person name="Miyake S."/>
            <person name="Morris K."/>
            <person name="Mottagui-Tabar S."/>
            <person name="Mulder N."/>
            <person name="Nakano N."/>
            <person name="Nakauchi H."/>
            <person name="Ng P."/>
            <person name="Nilsson R."/>
            <person name="Nishiguchi S."/>
            <person name="Nishikawa S."/>
            <person name="Nori F."/>
            <person name="Ohara O."/>
            <person name="Okazaki Y."/>
            <person name="Orlando V."/>
            <person name="Pang K.C."/>
            <person name="Pavan W.J."/>
            <person name="Pavesi G."/>
            <person name="Pesole G."/>
            <person name="Petrovsky N."/>
            <person name="Piazza S."/>
            <person name="Reed J."/>
            <person name="Reid J.F."/>
            <person name="Ring B.Z."/>
            <person name="Ringwald M."/>
            <person name="Rost B."/>
            <person name="Ruan Y."/>
            <person name="Salzberg S.L."/>
            <person name="Sandelin A."/>
            <person name="Schneider C."/>
            <person name="Schoenbach C."/>
            <person name="Sekiguchi K."/>
            <person name="Semple C.A."/>
            <person name="Seno S."/>
            <person name="Sessa L."/>
            <person name="Sheng Y."/>
            <person name="Shibata Y."/>
            <person name="Shimada H."/>
            <person name="Shimada K."/>
            <person name="Silva D."/>
            <person name="Sinclair B."/>
            <person name="Sperling S."/>
            <person name="Stupka E."/>
            <person name="Sugiura K."/>
            <person name="Sultana R."/>
            <person name="Takenaka Y."/>
            <person name="Taki K."/>
            <person name="Tammoja K."/>
            <person name="Tan S.L."/>
            <person name="Tang S."/>
            <person name="Taylor M.S."/>
            <person name="Tegner J."/>
            <person name="Teichmann S.A."/>
            <person name="Ueda H.R."/>
            <person name="van Nimwegen E."/>
            <person name="Verardo R."/>
            <person name="Wei C.L."/>
            <person name="Yagi K."/>
            <person name="Yamanishi H."/>
            <person name="Zabarovsky E."/>
            <person name="Zhu S."/>
            <person name="Zimmer A."/>
            <person name="Hide W."/>
            <person name="Bult C."/>
            <person name="Grimmond S.M."/>
            <person name="Teasdale R.D."/>
            <person name="Liu E.T."/>
            <person name="Brusic V."/>
            <person name="Quackenbush J."/>
            <person name="Wahlestedt C."/>
            <person name="Mattick J.S."/>
            <person name="Hume D.A."/>
            <person name="Kai C."/>
            <person name="Sasaki D."/>
            <person name="Tomaru Y."/>
            <person name="Fukuda S."/>
            <person name="Kanamori-Katayama M."/>
            <person name="Suzuki M."/>
            <person name="Aoki J."/>
            <person name="Arakawa T."/>
            <person name="Iida J."/>
            <person name="Imamura K."/>
            <person name="Itoh M."/>
            <person name="Kato T."/>
            <person name="Kawaji H."/>
            <person name="Kawagashira N."/>
            <person name="Kawashima T."/>
            <person name="Kojima M."/>
            <person name="Kondo S."/>
            <person name="Konno H."/>
            <person name="Nakano K."/>
            <person name="Ninomiya N."/>
            <person name="Nishio T."/>
            <person name="Okada M."/>
            <person name="Plessy C."/>
            <person name="Shibata K."/>
            <person name="Shiraki T."/>
            <person name="Suzuki S."/>
            <person name="Tagami M."/>
            <person name="Waki K."/>
            <person name="Watahiki A."/>
            <person name="Okamura-Oho Y."/>
            <person name="Suzuki H."/>
            <person name="Kawai J."/>
            <person name="Hayashizaki Y."/>
        </authorList>
    </citation>
    <scope>NUCLEOTIDE SEQUENCE [LARGE SCALE MRNA]</scope>
    <source>
        <strain>BALB/cJ</strain>
        <strain>C57BL/6J</strain>
        <tissue>Heart</tissue>
    </source>
</reference>
<reference key="3">
    <citation type="journal article" date="2003" name="Mamm. Genome">
        <title>Characterization of the mouse genes for mitochondrial transcription factors B1 and B2.</title>
        <authorList>
            <person name="Rantanen A."/>
            <person name="Gaspari M."/>
            <person name="Falkenberg M."/>
            <person name="Gustafsson C.M."/>
            <person name="Larsson N.-G."/>
        </authorList>
    </citation>
    <scope>TISSUE SPECIFICITY</scope>
</reference>
<reference key="4">
    <citation type="journal article" date="2004" name="EMBO J.">
        <title>The mitochondrial RNA polymerase contributes critically to promoter specificity in mammalian cells.</title>
        <authorList>
            <person name="Gaspari M."/>
            <person name="Falkenberg M."/>
            <person name="Larsson N.-G."/>
            <person name="Gustafsson C.M."/>
        </authorList>
    </citation>
    <scope>FUNCTION</scope>
</reference>
<proteinExistence type="evidence at transcript level"/>
<organism>
    <name type="scientific">Mus musculus</name>
    <name type="common">Mouse</name>
    <dbReference type="NCBI Taxonomy" id="10090"/>
    <lineage>
        <taxon>Eukaryota</taxon>
        <taxon>Metazoa</taxon>
        <taxon>Chordata</taxon>
        <taxon>Craniata</taxon>
        <taxon>Vertebrata</taxon>
        <taxon>Euteleostomi</taxon>
        <taxon>Mammalia</taxon>
        <taxon>Eutheria</taxon>
        <taxon>Euarchontoglires</taxon>
        <taxon>Glires</taxon>
        <taxon>Rodentia</taxon>
        <taxon>Myomorpha</taxon>
        <taxon>Muroidea</taxon>
        <taxon>Muridae</taxon>
        <taxon>Murinae</taxon>
        <taxon>Mus</taxon>
        <taxon>Mus</taxon>
    </lineage>
</organism>
<name>TFB2M_MOUSE</name>
<gene>
    <name evidence="9" type="primary">Tfb2m</name>
</gene>
<dbReference type="EC" id="2.1.1.-" evidence="2"/>
<dbReference type="EMBL" id="M74555">
    <property type="protein sequence ID" value="AAA37817.1"/>
    <property type="molecule type" value="mRNA"/>
</dbReference>
<dbReference type="EMBL" id="AK090106">
    <property type="protein sequence ID" value="BAC41095.1"/>
    <property type="molecule type" value="mRNA"/>
</dbReference>
<dbReference type="EMBL" id="AK146563">
    <property type="protein sequence ID" value="BAE27262.1"/>
    <property type="molecule type" value="mRNA"/>
</dbReference>
<dbReference type="EMBL" id="AK166717">
    <property type="protein sequence ID" value="BAE38967.1"/>
    <property type="molecule type" value="mRNA"/>
</dbReference>
<dbReference type="EMBL" id="AK167930">
    <property type="protein sequence ID" value="BAE39934.1"/>
    <property type="molecule type" value="mRNA"/>
</dbReference>
<dbReference type="EMBL" id="AK168970">
    <property type="protein sequence ID" value="BAE40774.1"/>
    <property type="molecule type" value="mRNA"/>
</dbReference>
<dbReference type="EMBL" id="AK169138">
    <property type="protein sequence ID" value="BAE40917.1"/>
    <property type="molecule type" value="mRNA"/>
</dbReference>
<dbReference type="CCDS" id="CCDS15561.1"/>
<dbReference type="PIR" id="S27870">
    <property type="entry name" value="S27870"/>
</dbReference>
<dbReference type="RefSeq" id="NP_001317984.1">
    <property type="nucleotide sequence ID" value="NM_001331055.1"/>
</dbReference>
<dbReference type="RefSeq" id="NP_032275.2">
    <property type="nucleotide sequence ID" value="NM_008249.6"/>
</dbReference>
<dbReference type="SMR" id="Q3TL26"/>
<dbReference type="BioGRID" id="200317">
    <property type="interactions" value="4"/>
</dbReference>
<dbReference type="FunCoup" id="Q3TL26">
    <property type="interactions" value="1345"/>
</dbReference>
<dbReference type="STRING" id="10090.ENSMUSP00000027769"/>
<dbReference type="iPTMnet" id="Q3TL26"/>
<dbReference type="PhosphoSitePlus" id="Q3TL26"/>
<dbReference type="PaxDb" id="10090-ENSMUSP00000027769"/>
<dbReference type="PeptideAtlas" id="Q3TL26"/>
<dbReference type="ProteomicsDB" id="259375"/>
<dbReference type="Pumba" id="Q3TL26"/>
<dbReference type="Antibodypedia" id="34721">
    <property type="antibodies" value="252 antibodies from 28 providers"/>
</dbReference>
<dbReference type="DNASU" id="15278"/>
<dbReference type="Ensembl" id="ENSMUST00000027769.6">
    <property type="protein sequence ID" value="ENSMUSP00000027769.6"/>
    <property type="gene ID" value="ENSMUSG00000026492.12"/>
</dbReference>
<dbReference type="GeneID" id="15278"/>
<dbReference type="KEGG" id="mmu:15278"/>
<dbReference type="UCSC" id="uc007dvl.1">
    <property type="organism name" value="mouse"/>
</dbReference>
<dbReference type="AGR" id="MGI:107937"/>
<dbReference type="CTD" id="64216"/>
<dbReference type="MGI" id="MGI:107937">
    <property type="gene designation" value="Tfb2m"/>
</dbReference>
<dbReference type="VEuPathDB" id="HostDB:ENSMUSG00000026492"/>
<dbReference type="eggNOG" id="KOG0820">
    <property type="taxonomic scope" value="Eukaryota"/>
</dbReference>
<dbReference type="GeneTree" id="ENSGT00950000183142"/>
<dbReference type="HOGENOM" id="CLU_051778_1_0_1"/>
<dbReference type="InParanoid" id="Q3TL26"/>
<dbReference type="OMA" id="IFEVPWT"/>
<dbReference type="OrthoDB" id="9895503at2759"/>
<dbReference type="PhylomeDB" id="Q3TL26"/>
<dbReference type="TreeFam" id="TF325100"/>
<dbReference type="Reactome" id="R-MMU-163282">
    <property type="pathway name" value="Mitochondrial transcription initiation"/>
</dbReference>
<dbReference type="BioGRID-ORCS" id="15278">
    <property type="hits" value="14 hits in 78 CRISPR screens"/>
</dbReference>
<dbReference type="ChiTaRS" id="Tfb2m">
    <property type="organism name" value="mouse"/>
</dbReference>
<dbReference type="PRO" id="PR:Q3TL26"/>
<dbReference type="Proteomes" id="UP000000589">
    <property type="component" value="Chromosome 1"/>
</dbReference>
<dbReference type="RNAct" id="Q3TL26">
    <property type="molecule type" value="protein"/>
</dbReference>
<dbReference type="Bgee" id="ENSMUSG00000026492">
    <property type="expression patterns" value="Expressed in hindlimb stylopod muscle and 70 other cell types or tissues"/>
</dbReference>
<dbReference type="ExpressionAtlas" id="Q3TL26">
    <property type="expression patterns" value="baseline and differential"/>
</dbReference>
<dbReference type="GO" id="GO:0042645">
    <property type="term" value="C:mitochondrial nucleoid"/>
    <property type="evidence" value="ECO:0007669"/>
    <property type="project" value="Ensembl"/>
</dbReference>
<dbReference type="GO" id="GO:0005739">
    <property type="term" value="C:mitochondrion"/>
    <property type="evidence" value="ECO:0007005"/>
    <property type="project" value="MGI"/>
</dbReference>
<dbReference type="GO" id="GO:0034246">
    <property type="term" value="F:mitochondrial transcription factor activity"/>
    <property type="evidence" value="ECO:0000250"/>
    <property type="project" value="UniProtKB"/>
</dbReference>
<dbReference type="GO" id="GO:0003723">
    <property type="term" value="F:RNA binding"/>
    <property type="evidence" value="ECO:0007669"/>
    <property type="project" value="UniProtKB-KW"/>
</dbReference>
<dbReference type="GO" id="GO:0000179">
    <property type="term" value="F:rRNA (adenine-N6,N6-)-dimethyltransferase activity"/>
    <property type="evidence" value="ECO:0007669"/>
    <property type="project" value="InterPro"/>
</dbReference>
<dbReference type="GO" id="GO:0008988">
    <property type="term" value="F:rRNA (adenine-N6-)-methyltransferase activity"/>
    <property type="evidence" value="ECO:0007669"/>
    <property type="project" value="RHEA"/>
</dbReference>
<dbReference type="GO" id="GO:0006391">
    <property type="term" value="P:transcription initiation at mitochondrial promoter"/>
    <property type="evidence" value="ECO:0000250"/>
    <property type="project" value="UniProtKB"/>
</dbReference>
<dbReference type="FunFam" id="3.40.50.150:FF:000209">
    <property type="entry name" value="rRNA adenine N(6)-methyltransferase"/>
    <property type="match status" value="1"/>
</dbReference>
<dbReference type="Gene3D" id="3.40.50.150">
    <property type="entry name" value="Vaccinia Virus protein VP39"/>
    <property type="match status" value="1"/>
</dbReference>
<dbReference type="InterPro" id="IPR001737">
    <property type="entry name" value="KsgA/Erm"/>
</dbReference>
<dbReference type="InterPro" id="IPR020598">
    <property type="entry name" value="rRNA_Ade_methylase_Trfase_N"/>
</dbReference>
<dbReference type="InterPro" id="IPR029063">
    <property type="entry name" value="SAM-dependent_MTases_sf"/>
</dbReference>
<dbReference type="PANTHER" id="PTHR11727">
    <property type="entry name" value="DIMETHYLADENOSINE TRANSFERASE"/>
    <property type="match status" value="1"/>
</dbReference>
<dbReference type="PANTHER" id="PTHR11727:SF13">
    <property type="entry name" value="DIMETHYLADENOSINE TRANSFERASE 2, MITOCHONDRIAL"/>
    <property type="match status" value="1"/>
</dbReference>
<dbReference type="Pfam" id="PF00398">
    <property type="entry name" value="RrnaAD"/>
    <property type="match status" value="1"/>
</dbReference>
<dbReference type="PIRSF" id="PIRSF027833">
    <property type="entry name" value="MtTFB2"/>
    <property type="match status" value="1"/>
</dbReference>
<dbReference type="SMART" id="SM00650">
    <property type="entry name" value="rADc"/>
    <property type="match status" value="1"/>
</dbReference>
<dbReference type="SUPFAM" id="SSF53335">
    <property type="entry name" value="S-adenosyl-L-methionine-dependent methyltransferases"/>
    <property type="match status" value="1"/>
</dbReference>
<dbReference type="PROSITE" id="PS51689">
    <property type="entry name" value="SAM_RNA_A_N6_MT"/>
    <property type="match status" value="1"/>
</dbReference>
<accession>Q3TL26</accession>
<accession>Q61669</accession>
<accession>Q8BTJ2</accession>